<name>HB2A_MOUSE</name>
<evidence type="ECO:0000255" key="1"/>
<evidence type="ECO:0000255" key="2">
    <source>
        <dbReference type="PROSITE-ProRule" id="PRU00114"/>
    </source>
</evidence>
<evidence type="ECO:0000269" key="3">
    <source>
    </source>
</evidence>
<evidence type="ECO:0000269" key="4">
    <source>
    </source>
</evidence>
<evidence type="ECO:0000305" key="5"/>
<evidence type="ECO:0007829" key="6">
    <source>
        <dbReference type="PDB" id="1LNU"/>
    </source>
</evidence>
<evidence type="ECO:0007829" key="7">
    <source>
        <dbReference type="PDB" id="8RAL"/>
    </source>
</evidence>
<gene>
    <name type="primary">H2-Ab1</name>
    <name type="synonym">H2-iabeta</name>
</gene>
<comment type="subcellular location">
    <subcellularLocation>
        <location evidence="5">Membrane</location>
        <topology evidence="5">Single-pass type I membrane protein</topology>
    </subcellularLocation>
</comment>
<comment type="PTM">
    <text evidence="3 4">Ubiquitinated in immature dendritic cells leading to down-regulation of MHC class II.</text>
</comment>
<comment type="similarity">
    <text evidence="5">Belongs to the MHC class II family.</text>
</comment>
<accession>P14483</accession>
<proteinExistence type="evidence at protein level"/>
<protein>
    <recommendedName>
        <fullName>H-2 class II histocompatibility antigen, A beta chain</fullName>
    </recommendedName>
</protein>
<dbReference type="EMBL" id="V01527">
    <property type="protein sequence ID" value="CAA24768.1"/>
    <property type="molecule type" value="Genomic_DNA"/>
</dbReference>
<dbReference type="EMBL" id="AF027865">
    <property type="protein sequence ID" value="AAB81531.1"/>
    <property type="molecule type" value="Genomic_DNA"/>
</dbReference>
<dbReference type="CCDS" id="CCDS37583.1"/>
<dbReference type="PIR" id="I48656">
    <property type="entry name" value="I48656"/>
</dbReference>
<dbReference type="RefSeq" id="NP_996988.2">
    <property type="nucleotide sequence ID" value="NM_207105.3"/>
</dbReference>
<dbReference type="PDB" id="1LNU">
    <property type="method" value="X-ray"/>
    <property type="resolution" value="2.50 A"/>
    <property type="chains" value="B/D/F/H=27-216"/>
</dbReference>
<dbReference type="PDB" id="1MUJ">
    <property type="method" value="X-ray"/>
    <property type="resolution" value="2.15 A"/>
    <property type="chains" value="B=28-216"/>
</dbReference>
<dbReference type="PDB" id="3C5Z">
    <property type="method" value="X-ray"/>
    <property type="resolution" value="2.55 A"/>
    <property type="chains" value="D/H=30-216"/>
</dbReference>
<dbReference type="PDB" id="3C60">
    <property type="method" value="X-ray"/>
    <property type="resolution" value="3.05 A"/>
    <property type="chains" value="D/H=30-216"/>
</dbReference>
<dbReference type="PDB" id="3C6L">
    <property type="method" value="X-ray"/>
    <property type="resolution" value="3.40 A"/>
    <property type="chains" value="D/H=30-216"/>
</dbReference>
<dbReference type="PDB" id="3RDT">
    <property type="method" value="X-ray"/>
    <property type="resolution" value="2.70 A"/>
    <property type="chains" value="D=30-218"/>
</dbReference>
<dbReference type="PDB" id="4P23">
    <property type="method" value="X-ray"/>
    <property type="resolution" value="2.25 A"/>
    <property type="chains" value="D=31-219"/>
</dbReference>
<dbReference type="PDB" id="4P46">
    <property type="method" value="X-ray"/>
    <property type="resolution" value="2.85 A"/>
    <property type="chains" value="D=31-219"/>
</dbReference>
<dbReference type="PDB" id="4P5T">
    <property type="method" value="X-ray"/>
    <property type="resolution" value="3.26 A"/>
    <property type="chains" value="D/H=27-218"/>
</dbReference>
<dbReference type="PDB" id="6MKD">
    <property type="method" value="X-ray"/>
    <property type="resolution" value="3.20 A"/>
    <property type="chains" value="D=21-218"/>
</dbReference>
<dbReference type="PDB" id="6MKR">
    <property type="method" value="X-ray"/>
    <property type="resolution" value="3.35 A"/>
    <property type="chains" value="D=21-218"/>
</dbReference>
<dbReference type="PDB" id="6MNG">
    <property type="method" value="X-ray"/>
    <property type="resolution" value="2.66 A"/>
    <property type="chains" value="D=21-218"/>
</dbReference>
<dbReference type="PDB" id="6MNM">
    <property type="method" value="X-ray"/>
    <property type="resolution" value="3.10 A"/>
    <property type="chains" value="D=21-218"/>
</dbReference>
<dbReference type="PDB" id="6MNN">
    <property type="method" value="X-ray"/>
    <property type="resolution" value="2.83 A"/>
    <property type="chains" value="D=21-218"/>
</dbReference>
<dbReference type="PDB" id="6MNO">
    <property type="method" value="X-ray"/>
    <property type="resolution" value="2.90 A"/>
    <property type="chains" value="D=31-218"/>
</dbReference>
<dbReference type="PDB" id="8RAL">
    <property type="method" value="X-ray"/>
    <property type="resolution" value="2.10 A"/>
    <property type="chains" value="B=28-226"/>
</dbReference>
<dbReference type="PDB" id="8VQ8">
    <property type="method" value="X-ray"/>
    <property type="resolution" value="2.01 A"/>
    <property type="chains" value="D=28-216"/>
</dbReference>
<dbReference type="PDB" id="9AUD">
    <property type="method" value="X-ray"/>
    <property type="resolution" value="2.90 A"/>
    <property type="chains" value="D=28-216"/>
</dbReference>
<dbReference type="PDB" id="9CYL">
    <property type="method" value="X-ray"/>
    <property type="resolution" value="4.66 A"/>
    <property type="chains" value="B=27-218"/>
</dbReference>
<dbReference type="PDB" id="9CYM">
    <property type="method" value="X-ray"/>
    <property type="resolution" value="3.84 A"/>
    <property type="chains" value="B=28-218"/>
</dbReference>
<dbReference type="PDBsum" id="1LNU"/>
<dbReference type="PDBsum" id="1MUJ"/>
<dbReference type="PDBsum" id="3C5Z"/>
<dbReference type="PDBsum" id="3C60"/>
<dbReference type="PDBsum" id="3C6L"/>
<dbReference type="PDBsum" id="3RDT"/>
<dbReference type="PDBsum" id="4P23"/>
<dbReference type="PDBsum" id="4P46"/>
<dbReference type="PDBsum" id="4P5T"/>
<dbReference type="PDBsum" id="6MKD"/>
<dbReference type="PDBsum" id="6MKR"/>
<dbReference type="PDBsum" id="6MNG"/>
<dbReference type="PDBsum" id="6MNM"/>
<dbReference type="PDBsum" id="6MNN"/>
<dbReference type="PDBsum" id="6MNO"/>
<dbReference type="PDBsum" id="8RAL"/>
<dbReference type="PDBsum" id="8VQ8"/>
<dbReference type="PDBsum" id="9AUD"/>
<dbReference type="PDBsum" id="9CYL"/>
<dbReference type="PDBsum" id="9CYM"/>
<dbReference type="SMR" id="P14483"/>
<dbReference type="BioGRID" id="200147">
    <property type="interactions" value="1"/>
</dbReference>
<dbReference type="IntAct" id="P14483">
    <property type="interactions" value="1"/>
</dbReference>
<dbReference type="MINT" id="P14483"/>
<dbReference type="STRING" id="10090.ENSMUSP00000041008"/>
<dbReference type="GlyCosmos" id="P14483">
    <property type="glycosylation" value="1 site, No reported glycans"/>
</dbReference>
<dbReference type="iPTMnet" id="P14483"/>
<dbReference type="PhosphoSitePlus" id="P14483"/>
<dbReference type="jPOST" id="P14483"/>
<dbReference type="PaxDb" id="10090-ENSMUSP00000041008"/>
<dbReference type="ProteomicsDB" id="269678"/>
<dbReference type="ABCD" id="P14483">
    <property type="antibodies" value="5 sequenced antibodies"/>
</dbReference>
<dbReference type="Antibodypedia" id="53255">
    <property type="antibodies" value="127 antibodies from 21 providers"/>
</dbReference>
<dbReference type="DNASU" id="14961"/>
<dbReference type="Ensembl" id="ENSMUST00000040828.7">
    <property type="protein sequence ID" value="ENSMUSP00000041008.6"/>
    <property type="gene ID" value="ENSMUSG00000073421.7"/>
</dbReference>
<dbReference type="GeneID" id="14961"/>
<dbReference type="KEGG" id="mmu:14961"/>
<dbReference type="UCSC" id="uc008ccb.2">
    <property type="organism name" value="mouse"/>
</dbReference>
<dbReference type="AGR" id="MGI:103070"/>
<dbReference type="CTD" id="14961"/>
<dbReference type="MGI" id="MGI:103070">
    <property type="gene designation" value="H2-Ab1"/>
</dbReference>
<dbReference type="VEuPathDB" id="HostDB:ENSMUSG00000073421"/>
<dbReference type="eggNOG" id="ENOG502RYBQ">
    <property type="taxonomic scope" value="Eukaryota"/>
</dbReference>
<dbReference type="GeneTree" id="ENSGT00940000154723"/>
<dbReference type="HOGENOM" id="CLU_047501_13_1_1"/>
<dbReference type="OMA" id="RHNYRIE"/>
<dbReference type="OrthoDB" id="10043043at2759"/>
<dbReference type="PhylomeDB" id="P14483"/>
<dbReference type="TreeFam" id="TF336626"/>
<dbReference type="BioGRID-ORCS" id="14961">
    <property type="hits" value="2 hits in 81 CRISPR screens"/>
</dbReference>
<dbReference type="ChiTaRS" id="H2-Ab1">
    <property type="organism name" value="mouse"/>
</dbReference>
<dbReference type="EvolutionaryTrace" id="P14483"/>
<dbReference type="Proteomes" id="UP000000589">
    <property type="component" value="Chromosome 17"/>
</dbReference>
<dbReference type="Bgee" id="ENSMUSG00000073421">
    <property type="expression patterns" value="Expressed in peripheral lymph node and 180 other cell types or tissues"/>
</dbReference>
<dbReference type="ExpressionAtlas" id="P14483">
    <property type="expression patterns" value="baseline and differential"/>
</dbReference>
<dbReference type="GO" id="GO:0005769">
    <property type="term" value="C:early endosome"/>
    <property type="evidence" value="ECO:0000314"/>
    <property type="project" value="MGI"/>
</dbReference>
<dbReference type="GO" id="GO:0009897">
    <property type="term" value="C:external side of plasma membrane"/>
    <property type="evidence" value="ECO:0000314"/>
    <property type="project" value="MGI"/>
</dbReference>
<dbReference type="GO" id="GO:0005794">
    <property type="term" value="C:Golgi apparatus"/>
    <property type="evidence" value="ECO:0000314"/>
    <property type="project" value="MGI"/>
</dbReference>
<dbReference type="GO" id="GO:0016020">
    <property type="term" value="C:membrane"/>
    <property type="evidence" value="ECO:0000314"/>
    <property type="project" value="MGI"/>
</dbReference>
<dbReference type="GO" id="GO:0042613">
    <property type="term" value="C:MHC class II protein complex"/>
    <property type="evidence" value="ECO:0000314"/>
    <property type="project" value="MGI"/>
</dbReference>
<dbReference type="GO" id="GO:0005771">
    <property type="term" value="C:multivesicular body"/>
    <property type="evidence" value="ECO:0000314"/>
    <property type="project" value="MGI"/>
</dbReference>
<dbReference type="GO" id="GO:0005886">
    <property type="term" value="C:plasma membrane"/>
    <property type="evidence" value="ECO:0000314"/>
    <property type="project" value="MGI"/>
</dbReference>
<dbReference type="GO" id="GO:0042605">
    <property type="term" value="F:peptide antigen binding"/>
    <property type="evidence" value="ECO:0000314"/>
    <property type="project" value="MGI"/>
</dbReference>
<dbReference type="GO" id="GO:1990405">
    <property type="term" value="F:protein antigen binding"/>
    <property type="evidence" value="ECO:0000353"/>
    <property type="project" value="BHF-UCL"/>
</dbReference>
<dbReference type="GO" id="GO:0015643">
    <property type="term" value="F:toxic substance binding"/>
    <property type="evidence" value="ECO:0000353"/>
    <property type="project" value="BHF-UCL"/>
</dbReference>
<dbReference type="GO" id="GO:0031625">
    <property type="term" value="F:ubiquitin protein ligase binding"/>
    <property type="evidence" value="ECO:0000353"/>
    <property type="project" value="BHF-UCL"/>
</dbReference>
<dbReference type="GO" id="GO:0019882">
    <property type="term" value="P:antigen processing and presentation"/>
    <property type="evidence" value="ECO:0000314"/>
    <property type="project" value="MGI"/>
</dbReference>
<dbReference type="GO" id="GO:0019886">
    <property type="term" value="P:antigen processing and presentation of exogenous peptide antigen via MHC class II"/>
    <property type="evidence" value="ECO:0000314"/>
    <property type="project" value="MGI"/>
</dbReference>
<dbReference type="GO" id="GO:0048002">
    <property type="term" value="P:antigen processing and presentation of peptide antigen"/>
    <property type="evidence" value="ECO:0000314"/>
    <property type="project" value="MGI"/>
</dbReference>
<dbReference type="GO" id="GO:0002344">
    <property type="term" value="P:B cell affinity maturation"/>
    <property type="evidence" value="ECO:0000314"/>
    <property type="project" value="BHF-UCL"/>
</dbReference>
<dbReference type="GO" id="GO:0071346">
    <property type="term" value="P:cellular response to type II interferon"/>
    <property type="evidence" value="ECO:0000314"/>
    <property type="project" value="BHF-UCL"/>
</dbReference>
<dbReference type="GO" id="GO:0006955">
    <property type="term" value="P:immune response"/>
    <property type="evidence" value="ECO:0000315"/>
    <property type="project" value="MGI"/>
</dbReference>
<dbReference type="GO" id="GO:0046635">
    <property type="term" value="P:positive regulation of alpha-beta T cell activation"/>
    <property type="evidence" value="ECO:0000314"/>
    <property type="project" value="BHF-UCL"/>
</dbReference>
<dbReference type="GO" id="GO:0002579">
    <property type="term" value="P:positive regulation of antigen processing and presentation"/>
    <property type="evidence" value="ECO:0000314"/>
    <property type="project" value="BHF-UCL"/>
</dbReference>
<dbReference type="GO" id="GO:0002827">
    <property type="term" value="P:positive regulation of T-helper 1 type immune response"/>
    <property type="evidence" value="ECO:0000314"/>
    <property type="project" value="BHF-UCL"/>
</dbReference>
<dbReference type="CDD" id="cd21001">
    <property type="entry name" value="IgC1_MHC_II_beta_HLA-DQ_I-A"/>
    <property type="match status" value="1"/>
</dbReference>
<dbReference type="FunFam" id="2.60.40.10:FF:000116">
    <property type="entry name" value="HLA class II histocompatibility antigen, DRB1-1 beta chain"/>
    <property type="match status" value="1"/>
</dbReference>
<dbReference type="FunFam" id="3.10.320.10:FF:000001">
    <property type="entry name" value="HLA class II histocompatibility antigen, DRB1-1 beta chain"/>
    <property type="match status" value="1"/>
</dbReference>
<dbReference type="Gene3D" id="3.10.320.10">
    <property type="entry name" value="Class II Histocompatibility Antigen, M Beta Chain, Chain B, domain 1"/>
    <property type="match status" value="1"/>
</dbReference>
<dbReference type="Gene3D" id="2.60.40.10">
    <property type="entry name" value="Immunoglobulins"/>
    <property type="match status" value="1"/>
</dbReference>
<dbReference type="InterPro" id="IPR007110">
    <property type="entry name" value="Ig-like_dom"/>
</dbReference>
<dbReference type="InterPro" id="IPR036179">
    <property type="entry name" value="Ig-like_dom_sf"/>
</dbReference>
<dbReference type="InterPro" id="IPR013783">
    <property type="entry name" value="Ig-like_fold"/>
</dbReference>
<dbReference type="InterPro" id="IPR003006">
    <property type="entry name" value="Ig/MHC_CS"/>
</dbReference>
<dbReference type="InterPro" id="IPR003597">
    <property type="entry name" value="Ig_C1-set"/>
</dbReference>
<dbReference type="InterPro" id="IPR050160">
    <property type="entry name" value="MHC/Immunoglobulin"/>
</dbReference>
<dbReference type="InterPro" id="IPR011162">
    <property type="entry name" value="MHC_I/II-like_Ag-recog"/>
</dbReference>
<dbReference type="InterPro" id="IPR014745">
    <property type="entry name" value="MHC_II_a/b_N"/>
</dbReference>
<dbReference type="InterPro" id="IPR000353">
    <property type="entry name" value="MHC_II_b_N"/>
</dbReference>
<dbReference type="PANTHER" id="PTHR19944:SF101">
    <property type="entry name" value="HLA CLASS II HISTOCOMPATIBILITY ANTIGEN, DQ BETA 1 CHAIN"/>
    <property type="match status" value="1"/>
</dbReference>
<dbReference type="PANTHER" id="PTHR19944">
    <property type="entry name" value="MHC CLASS II-RELATED"/>
    <property type="match status" value="1"/>
</dbReference>
<dbReference type="Pfam" id="PF07654">
    <property type="entry name" value="C1-set"/>
    <property type="match status" value="1"/>
</dbReference>
<dbReference type="Pfam" id="PF00969">
    <property type="entry name" value="MHC_II_beta"/>
    <property type="match status" value="1"/>
</dbReference>
<dbReference type="SMART" id="SM00407">
    <property type="entry name" value="IGc1"/>
    <property type="match status" value="1"/>
</dbReference>
<dbReference type="SMART" id="SM00921">
    <property type="entry name" value="MHC_II_beta"/>
    <property type="match status" value="1"/>
</dbReference>
<dbReference type="SUPFAM" id="SSF48726">
    <property type="entry name" value="Immunoglobulin"/>
    <property type="match status" value="1"/>
</dbReference>
<dbReference type="SUPFAM" id="SSF54452">
    <property type="entry name" value="MHC antigen-recognition domain"/>
    <property type="match status" value="1"/>
</dbReference>
<dbReference type="PROSITE" id="PS50835">
    <property type="entry name" value="IG_LIKE"/>
    <property type="match status" value="1"/>
</dbReference>
<dbReference type="PROSITE" id="PS00290">
    <property type="entry name" value="IG_MHC"/>
    <property type="match status" value="1"/>
</dbReference>
<organism>
    <name type="scientific">Mus musculus</name>
    <name type="common">Mouse</name>
    <dbReference type="NCBI Taxonomy" id="10090"/>
    <lineage>
        <taxon>Eukaryota</taxon>
        <taxon>Metazoa</taxon>
        <taxon>Chordata</taxon>
        <taxon>Craniata</taxon>
        <taxon>Vertebrata</taxon>
        <taxon>Euteleostomi</taxon>
        <taxon>Mammalia</taxon>
        <taxon>Eutheria</taxon>
        <taxon>Euarchontoglires</taxon>
        <taxon>Glires</taxon>
        <taxon>Rodentia</taxon>
        <taxon>Myomorpha</taxon>
        <taxon>Muroidea</taxon>
        <taxon>Muridae</taxon>
        <taxon>Murinae</taxon>
        <taxon>Mus</taxon>
        <taxon>Mus</taxon>
    </lineage>
</organism>
<feature type="signal peptide">
    <location>
        <begin position="1"/>
        <end position="27"/>
    </location>
</feature>
<feature type="chain" id="PRO_0000018993" description="H-2 class II histocompatibility antigen, A beta chain">
    <location>
        <begin position="28"/>
        <end position="265"/>
    </location>
</feature>
<feature type="topological domain" description="Extracellular" evidence="1">
    <location>
        <begin position="28"/>
        <end position="226"/>
    </location>
</feature>
<feature type="transmembrane region" description="Helical" evidence="1">
    <location>
        <begin position="227"/>
        <end position="247"/>
    </location>
</feature>
<feature type="topological domain" description="Cytoplasmic" evidence="1">
    <location>
        <begin position="248"/>
        <end position="265"/>
    </location>
</feature>
<feature type="domain" description="Ig-like C1-type">
    <location>
        <begin position="125"/>
        <end position="213"/>
    </location>
</feature>
<feature type="region of interest" description="Beta-1">
    <location>
        <begin position="28"/>
        <end position="122"/>
    </location>
</feature>
<feature type="region of interest" description="Beta-2">
    <location>
        <begin position="123"/>
        <end position="216"/>
    </location>
</feature>
<feature type="region of interest" description="Connecting peptide">
    <location>
        <begin position="217"/>
        <end position="226"/>
    </location>
</feature>
<feature type="glycosylation site" description="N-linked (GlcNAc...) asparagine" evidence="1">
    <location>
        <position position="46"/>
    </location>
</feature>
<feature type="disulfide bond" evidence="2">
    <location>
        <begin position="42"/>
        <end position="106"/>
    </location>
</feature>
<feature type="disulfide bond" evidence="2">
    <location>
        <begin position="145"/>
        <end position="201"/>
    </location>
</feature>
<feature type="strand" evidence="7">
    <location>
        <begin position="34"/>
        <end position="45"/>
    </location>
</feature>
<feature type="turn" evidence="7">
    <location>
        <begin position="46"/>
        <end position="49"/>
    </location>
</feature>
<feature type="strand" evidence="7">
    <location>
        <begin position="50"/>
        <end position="59"/>
    </location>
</feature>
<feature type="strand" evidence="7">
    <location>
        <begin position="62"/>
        <end position="68"/>
    </location>
</feature>
<feature type="turn" evidence="7">
    <location>
        <begin position="69"/>
        <end position="71"/>
    </location>
</feature>
<feature type="strand" evidence="7">
    <location>
        <begin position="72"/>
        <end position="78"/>
    </location>
</feature>
<feature type="helix" evidence="7">
    <location>
        <begin position="79"/>
        <end position="81"/>
    </location>
</feature>
<feature type="helix" evidence="7">
    <location>
        <begin position="82"/>
        <end position="90"/>
    </location>
</feature>
<feature type="helix" evidence="7">
    <location>
        <begin position="92"/>
        <end position="104"/>
    </location>
</feature>
<feature type="helix" evidence="7">
    <location>
        <begin position="106"/>
        <end position="109"/>
    </location>
</feature>
<feature type="helix" evidence="7">
    <location>
        <begin position="113"/>
        <end position="116"/>
    </location>
</feature>
<feature type="turn" evidence="7">
    <location>
        <begin position="117"/>
        <end position="120"/>
    </location>
</feature>
<feature type="strand" evidence="7">
    <location>
        <begin position="126"/>
        <end position="131"/>
    </location>
</feature>
<feature type="turn" evidence="6">
    <location>
        <begin position="137"/>
        <end position="139"/>
    </location>
</feature>
<feature type="strand" evidence="7">
    <location>
        <begin position="142"/>
        <end position="153"/>
    </location>
</feature>
<feature type="strand" evidence="7">
    <location>
        <begin position="156"/>
        <end position="161"/>
    </location>
</feature>
<feature type="strand" evidence="7">
    <location>
        <begin position="164"/>
        <end position="166"/>
    </location>
</feature>
<feature type="strand" evidence="7">
    <location>
        <begin position="170"/>
        <end position="172"/>
    </location>
</feature>
<feature type="strand" evidence="7">
    <location>
        <begin position="179"/>
        <end position="181"/>
    </location>
</feature>
<feature type="strand" evidence="7">
    <location>
        <begin position="183"/>
        <end position="190"/>
    </location>
</feature>
<feature type="strand" evidence="7">
    <location>
        <begin position="199"/>
        <end position="204"/>
    </location>
</feature>
<feature type="strand" evidence="7">
    <location>
        <begin position="212"/>
        <end position="216"/>
    </location>
</feature>
<sequence>MALQIPSLLLSAAVVVLMVLSSPGTEGGDSERHFVYQFMGECYFTNGTQRIRYVTRYIYNREEYVRYDSDVGEHRAVTELGRPDAEYWNSQPEILERTRAELDTVCRHNYEGPETHTSLRRLEQPNVVISLSRTEALNHHNTLVCSVTDFYPAKIKVRWFRNGQEETVGVSSTQLIRNGDWTFQVLVMLEMTPRRGEVYTCHVEHPSLKSPITVEWRAQSESAWSKMLSGIGGCVLGVIFLGLGLFIRHRSQKGPRGPPPAGLLQ</sequence>
<keyword id="KW-0002">3D-structure</keyword>
<keyword id="KW-1064">Adaptive immunity</keyword>
<keyword id="KW-1015">Disulfide bond</keyword>
<keyword id="KW-0325">Glycoprotein</keyword>
<keyword id="KW-0391">Immunity</keyword>
<keyword id="KW-0472">Membrane</keyword>
<keyword id="KW-0491">MHC II</keyword>
<keyword id="KW-1185">Reference proteome</keyword>
<keyword id="KW-0732">Signal</keyword>
<keyword id="KW-0812">Transmembrane</keyword>
<keyword id="KW-1133">Transmembrane helix</keyword>
<keyword id="KW-0832">Ubl conjugation</keyword>
<reference key="1">
    <citation type="journal article" date="1983" name="Cell">
        <title>Structure of the murine immune response I-A beta locus: sequence of the I-A beta gene and an adjacent beta-chain second domain exon.</title>
        <authorList>
            <person name="Larhammar D."/>
            <person name="Hammerling U."/>
            <person name="Denaro M."/>
            <person name="Lund T."/>
            <person name="Flavell R.A."/>
            <person name="Rask L."/>
            <person name="Peterson P.A."/>
        </authorList>
    </citation>
    <scope>NUCLEOTIDE SEQUENCE [GENOMIC DNA]</scope>
</reference>
<reference key="2">
    <citation type="submission" date="1997-10" db="EMBL/GenBank/DDBJ databases">
        <authorList>
            <person name="Rowen L."/>
            <person name="Qin S."/>
            <person name="Ahearn M.E."/>
            <person name="Loretz C."/>
            <person name="Faust J."/>
            <person name="Lasky S."/>
            <person name="Mahairas G."/>
            <person name="Hood L.E."/>
        </authorList>
    </citation>
    <scope>NUCLEOTIDE SEQUENCE [GENOMIC DNA]</scope>
</reference>
<reference key="3">
    <citation type="journal article" date="2006" name="Immunity">
        <title>Dendritic cells regulate exposure of MHC class II at their plasma membrane by oligoubiquitination.</title>
        <authorList>
            <person name="van Niel G."/>
            <person name="Wubbolts R."/>
            <person name="Ten Broeke T."/>
            <person name="Buschow S.I."/>
            <person name="Ossendorp F.A."/>
            <person name="Melief C.J."/>
            <person name="Raposo G."/>
            <person name="van Balkom B.W."/>
            <person name="Stoorvogel W."/>
        </authorList>
    </citation>
    <scope>UBIQUITINATION</scope>
</reference>
<reference key="4">
    <citation type="journal article" date="2006" name="Nature">
        <title>Surface expression of MHC class II in dendritic cells is controlled by regulated ubiquitination.</title>
        <authorList>
            <person name="Shin J.S."/>
            <person name="Ebersold M."/>
            <person name="Pypaert M."/>
            <person name="Delamarre L."/>
            <person name="Hartley A."/>
            <person name="Mellman I."/>
        </authorList>
    </citation>
    <scope>UBIQUITINATION</scope>
</reference>